<keyword id="KW-0046">Antibiotic resistance</keyword>
<keyword id="KW-1003">Cell membrane</keyword>
<keyword id="KW-0133">Cell shape</keyword>
<keyword id="KW-0961">Cell wall biogenesis/degradation</keyword>
<keyword id="KW-0378">Hydrolase</keyword>
<keyword id="KW-0472">Membrane</keyword>
<keyword id="KW-0573">Peptidoglycan synthesis</keyword>
<keyword id="KW-0812">Transmembrane</keyword>
<keyword id="KW-1133">Transmembrane helix</keyword>
<name>UPPP1_BACC1</name>
<comment type="function">
    <text evidence="1">Catalyzes the dephosphorylation of undecaprenyl diphosphate (UPP). Confers resistance to bacitracin.</text>
</comment>
<comment type="catalytic activity">
    <reaction evidence="1">
        <text>di-trans,octa-cis-undecaprenyl diphosphate + H2O = di-trans,octa-cis-undecaprenyl phosphate + phosphate + H(+)</text>
        <dbReference type="Rhea" id="RHEA:28094"/>
        <dbReference type="ChEBI" id="CHEBI:15377"/>
        <dbReference type="ChEBI" id="CHEBI:15378"/>
        <dbReference type="ChEBI" id="CHEBI:43474"/>
        <dbReference type="ChEBI" id="CHEBI:58405"/>
        <dbReference type="ChEBI" id="CHEBI:60392"/>
        <dbReference type="EC" id="3.6.1.27"/>
    </reaction>
</comment>
<comment type="subcellular location">
    <subcellularLocation>
        <location evidence="1">Cell membrane</location>
        <topology evidence="1">Multi-pass membrane protein</topology>
    </subcellularLocation>
</comment>
<comment type="miscellaneous">
    <text>Bacitracin is thought to be involved in the inhibition of peptidoglycan synthesis by sequestering undecaprenyl diphosphate, thereby reducing the pool of lipid carrier available.</text>
</comment>
<comment type="similarity">
    <text evidence="1">Belongs to the UppP family.</text>
</comment>
<sequence>MEQFYYILKYLILGLFQGLTEPIPISSSGHLVLAQHLLGLKIEGFSFELLVNSASLLAVLLIYRNDLIRLTKNGLSYIFTRAEDAKSDFFFIIYLVIATIPAGVIGVLFKDYIDQYLKGVKMVGISLLITAVGLWIIRNLRGRKNDGDLSMKDAIIVGLAQACALIPGISRSGATIVAAMLLGMKQETALRFSFLLYIPVSLGGLLLSITDIAKDPNLDTLFVPYIVAFIATFIMTYISLKWFMNIMAKGNLKYFSFYCIIVGVLTLIFL</sequence>
<dbReference type="EC" id="3.6.1.27" evidence="1"/>
<dbReference type="EMBL" id="AE017194">
    <property type="protein sequence ID" value="AAS39683.1"/>
    <property type="molecule type" value="Genomic_DNA"/>
</dbReference>
<dbReference type="SMR" id="P62461"/>
<dbReference type="KEGG" id="bca:BCE_0750"/>
<dbReference type="HOGENOM" id="CLU_060296_1_2_9"/>
<dbReference type="Proteomes" id="UP000002527">
    <property type="component" value="Chromosome"/>
</dbReference>
<dbReference type="GO" id="GO:0005886">
    <property type="term" value="C:plasma membrane"/>
    <property type="evidence" value="ECO:0007669"/>
    <property type="project" value="UniProtKB-SubCell"/>
</dbReference>
<dbReference type="GO" id="GO:0050380">
    <property type="term" value="F:undecaprenyl-diphosphatase activity"/>
    <property type="evidence" value="ECO:0007669"/>
    <property type="project" value="UniProtKB-UniRule"/>
</dbReference>
<dbReference type="GO" id="GO:0071555">
    <property type="term" value="P:cell wall organization"/>
    <property type="evidence" value="ECO:0007669"/>
    <property type="project" value="UniProtKB-KW"/>
</dbReference>
<dbReference type="GO" id="GO:0009252">
    <property type="term" value="P:peptidoglycan biosynthetic process"/>
    <property type="evidence" value="ECO:0007669"/>
    <property type="project" value="UniProtKB-KW"/>
</dbReference>
<dbReference type="GO" id="GO:0008360">
    <property type="term" value="P:regulation of cell shape"/>
    <property type="evidence" value="ECO:0007669"/>
    <property type="project" value="UniProtKB-KW"/>
</dbReference>
<dbReference type="GO" id="GO:0046677">
    <property type="term" value="P:response to antibiotic"/>
    <property type="evidence" value="ECO:0007669"/>
    <property type="project" value="UniProtKB-UniRule"/>
</dbReference>
<dbReference type="HAMAP" id="MF_01006">
    <property type="entry name" value="Undec_diphosphatase"/>
    <property type="match status" value="1"/>
</dbReference>
<dbReference type="InterPro" id="IPR003824">
    <property type="entry name" value="UppP"/>
</dbReference>
<dbReference type="PANTHER" id="PTHR30622">
    <property type="entry name" value="UNDECAPRENYL-DIPHOSPHATASE"/>
    <property type="match status" value="1"/>
</dbReference>
<dbReference type="PANTHER" id="PTHR30622:SF2">
    <property type="entry name" value="UNDECAPRENYL-DIPHOSPHATASE"/>
    <property type="match status" value="1"/>
</dbReference>
<dbReference type="Pfam" id="PF02673">
    <property type="entry name" value="BacA"/>
    <property type="match status" value="1"/>
</dbReference>
<feature type="chain" id="PRO_0000151088" description="Undecaprenyl-diphosphatase 1">
    <location>
        <begin position="1"/>
        <end position="270"/>
    </location>
</feature>
<feature type="transmembrane region" description="Helical" evidence="1">
    <location>
        <begin position="5"/>
        <end position="25"/>
    </location>
</feature>
<feature type="transmembrane region" description="Helical" evidence="1">
    <location>
        <begin position="42"/>
        <end position="62"/>
    </location>
</feature>
<feature type="transmembrane region" description="Helical" evidence="1">
    <location>
        <begin position="89"/>
        <end position="109"/>
    </location>
</feature>
<feature type="transmembrane region" description="Helical" evidence="1">
    <location>
        <begin position="117"/>
        <end position="137"/>
    </location>
</feature>
<feature type="transmembrane region" description="Helical" evidence="1">
    <location>
        <begin position="192"/>
        <end position="212"/>
    </location>
</feature>
<feature type="transmembrane region" description="Helical" evidence="1">
    <location>
        <begin position="220"/>
        <end position="240"/>
    </location>
</feature>
<feature type="transmembrane region" description="Helical" evidence="1">
    <location>
        <begin position="250"/>
        <end position="270"/>
    </location>
</feature>
<protein>
    <recommendedName>
        <fullName evidence="1">Undecaprenyl-diphosphatase 1</fullName>
        <ecNumber evidence="1">3.6.1.27</ecNumber>
    </recommendedName>
    <alternativeName>
        <fullName evidence="1">Bacitracin resistance protein 1</fullName>
    </alternativeName>
    <alternativeName>
        <fullName evidence="1">Undecaprenyl pyrophosphate phosphatase 1</fullName>
    </alternativeName>
</protein>
<gene>
    <name evidence="1" type="primary">uppP1</name>
    <name type="synonym">bacA1</name>
    <name type="synonym">upk1</name>
    <name type="ordered locus">BCE_0750</name>
</gene>
<proteinExistence type="inferred from homology"/>
<organism>
    <name type="scientific">Bacillus cereus (strain ATCC 10987 / NRS 248)</name>
    <dbReference type="NCBI Taxonomy" id="222523"/>
    <lineage>
        <taxon>Bacteria</taxon>
        <taxon>Bacillati</taxon>
        <taxon>Bacillota</taxon>
        <taxon>Bacilli</taxon>
        <taxon>Bacillales</taxon>
        <taxon>Bacillaceae</taxon>
        <taxon>Bacillus</taxon>
        <taxon>Bacillus cereus group</taxon>
    </lineage>
</organism>
<accession>P62461</accession>
<reference key="1">
    <citation type="journal article" date="2004" name="Nucleic Acids Res.">
        <title>The genome sequence of Bacillus cereus ATCC 10987 reveals metabolic adaptations and a large plasmid related to Bacillus anthracis pXO1.</title>
        <authorList>
            <person name="Rasko D.A."/>
            <person name="Ravel J."/>
            <person name="Oekstad O.A."/>
            <person name="Helgason E."/>
            <person name="Cer R.Z."/>
            <person name="Jiang L."/>
            <person name="Shores K.A."/>
            <person name="Fouts D.E."/>
            <person name="Tourasse N.J."/>
            <person name="Angiuoli S.V."/>
            <person name="Kolonay J.F."/>
            <person name="Nelson W.C."/>
            <person name="Kolstoe A.-B."/>
            <person name="Fraser C.M."/>
            <person name="Read T.D."/>
        </authorList>
    </citation>
    <scope>NUCLEOTIDE SEQUENCE [LARGE SCALE GENOMIC DNA]</scope>
    <source>
        <strain>ATCC 10987 / NRS 248</strain>
    </source>
</reference>
<evidence type="ECO:0000255" key="1">
    <source>
        <dbReference type="HAMAP-Rule" id="MF_01006"/>
    </source>
</evidence>